<keyword id="KW-0030">Aminoacyl-tRNA synthetase</keyword>
<keyword id="KW-0067">ATP-binding</keyword>
<keyword id="KW-0963">Cytoplasm</keyword>
<keyword id="KW-0436">Ligase</keyword>
<keyword id="KW-0547">Nucleotide-binding</keyword>
<keyword id="KW-0648">Protein biosynthesis</keyword>
<feature type="chain" id="PRO_1000199467" description="Serine--tRNA ligase">
    <location>
        <begin position="1"/>
        <end position="425"/>
    </location>
</feature>
<feature type="binding site" evidence="1">
    <location>
        <begin position="229"/>
        <end position="231"/>
    </location>
    <ligand>
        <name>L-serine</name>
        <dbReference type="ChEBI" id="CHEBI:33384"/>
    </ligand>
</feature>
<feature type="binding site" evidence="1">
    <location>
        <begin position="259"/>
        <end position="261"/>
    </location>
    <ligand>
        <name>ATP</name>
        <dbReference type="ChEBI" id="CHEBI:30616"/>
    </ligand>
</feature>
<feature type="binding site" evidence="1">
    <location>
        <position position="275"/>
    </location>
    <ligand>
        <name>ATP</name>
        <dbReference type="ChEBI" id="CHEBI:30616"/>
    </ligand>
</feature>
<feature type="binding site" evidence="1">
    <location>
        <position position="282"/>
    </location>
    <ligand>
        <name>L-serine</name>
        <dbReference type="ChEBI" id="CHEBI:33384"/>
    </ligand>
</feature>
<feature type="binding site" evidence="1">
    <location>
        <begin position="349"/>
        <end position="352"/>
    </location>
    <ligand>
        <name>ATP</name>
        <dbReference type="ChEBI" id="CHEBI:30616"/>
    </ligand>
</feature>
<feature type="binding site" evidence="1">
    <location>
        <position position="384"/>
    </location>
    <ligand>
        <name>L-serine</name>
        <dbReference type="ChEBI" id="CHEBI:33384"/>
    </ligand>
</feature>
<comment type="function">
    <text evidence="1">Catalyzes the attachment of serine to tRNA(Ser). Is also able to aminoacylate tRNA(Sec) with serine, to form the misacylated tRNA L-seryl-tRNA(Sec), which will be further converted into selenocysteinyl-tRNA(Sec).</text>
</comment>
<comment type="catalytic activity">
    <reaction evidence="1">
        <text>tRNA(Ser) + L-serine + ATP = L-seryl-tRNA(Ser) + AMP + diphosphate + H(+)</text>
        <dbReference type="Rhea" id="RHEA:12292"/>
        <dbReference type="Rhea" id="RHEA-COMP:9669"/>
        <dbReference type="Rhea" id="RHEA-COMP:9703"/>
        <dbReference type="ChEBI" id="CHEBI:15378"/>
        <dbReference type="ChEBI" id="CHEBI:30616"/>
        <dbReference type="ChEBI" id="CHEBI:33019"/>
        <dbReference type="ChEBI" id="CHEBI:33384"/>
        <dbReference type="ChEBI" id="CHEBI:78442"/>
        <dbReference type="ChEBI" id="CHEBI:78533"/>
        <dbReference type="ChEBI" id="CHEBI:456215"/>
        <dbReference type="EC" id="6.1.1.11"/>
    </reaction>
</comment>
<comment type="catalytic activity">
    <reaction evidence="1">
        <text>tRNA(Sec) + L-serine + ATP = L-seryl-tRNA(Sec) + AMP + diphosphate + H(+)</text>
        <dbReference type="Rhea" id="RHEA:42580"/>
        <dbReference type="Rhea" id="RHEA-COMP:9742"/>
        <dbReference type="Rhea" id="RHEA-COMP:10128"/>
        <dbReference type="ChEBI" id="CHEBI:15378"/>
        <dbReference type="ChEBI" id="CHEBI:30616"/>
        <dbReference type="ChEBI" id="CHEBI:33019"/>
        <dbReference type="ChEBI" id="CHEBI:33384"/>
        <dbReference type="ChEBI" id="CHEBI:78442"/>
        <dbReference type="ChEBI" id="CHEBI:78533"/>
        <dbReference type="ChEBI" id="CHEBI:456215"/>
        <dbReference type="EC" id="6.1.1.11"/>
    </reaction>
</comment>
<comment type="pathway">
    <text evidence="1">Aminoacyl-tRNA biosynthesis; selenocysteinyl-tRNA(Sec) biosynthesis; L-seryl-tRNA(Sec) from L-serine and tRNA(Sec): step 1/1.</text>
</comment>
<comment type="subunit">
    <text evidence="1">Homodimer. The tRNA molecule binds across the dimer.</text>
</comment>
<comment type="subcellular location">
    <subcellularLocation>
        <location evidence="1">Cytoplasm</location>
    </subcellularLocation>
</comment>
<comment type="domain">
    <text evidence="1">Consists of two distinct domains, a catalytic core and a N-terminal extension that is involved in tRNA binding.</text>
</comment>
<comment type="similarity">
    <text evidence="1">Belongs to the class-II aminoacyl-tRNA synthetase family. Type-1 seryl-tRNA synthetase subfamily.</text>
</comment>
<organism>
    <name type="scientific">Borreliella burgdorferi (strain ZS7)</name>
    <name type="common">Borrelia burgdorferi</name>
    <dbReference type="NCBI Taxonomy" id="445985"/>
    <lineage>
        <taxon>Bacteria</taxon>
        <taxon>Pseudomonadati</taxon>
        <taxon>Spirochaetota</taxon>
        <taxon>Spirochaetia</taxon>
        <taxon>Spirochaetales</taxon>
        <taxon>Borreliaceae</taxon>
        <taxon>Borreliella</taxon>
    </lineage>
</organism>
<dbReference type="EC" id="6.1.1.11" evidence="1"/>
<dbReference type="EMBL" id="CP001205">
    <property type="protein sequence ID" value="ACK74588.1"/>
    <property type="molecule type" value="Genomic_DNA"/>
</dbReference>
<dbReference type="RefSeq" id="WP_002657654.1">
    <property type="nucleotide sequence ID" value="NC_011728.1"/>
</dbReference>
<dbReference type="SMR" id="B7J1F4"/>
<dbReference type="GeneID" id="56567656"/>
<dbReference type="KEGG" id="bbz:BbuZS7_0231"/>
<dbReference type="HOGENOM" id="CLU_023797_0_1_12"/>
<dbReference type="UniPathway" id="UPA00906">
    <property type="reaction ID" value="UER00895"/>
</dbReference>
<dbReference type="Proteomes" id="UP000006901">
    <property type="component" value="Chromosome"/>
</dbReference>
<dbReference type="GO" id="GO:0005737">
    <property type="term" value="C:cytoplasm"/>
    <property type="evidence" value="ECO:0007669"/>
    <property type="project" value="UniProtKB-SubCell"/>
</dbReference>
<dbReference type="GO" id="GO:0005524">
    <property type="term" value="F:ATP binding"/>
    <property type="evidence" value="ECO:0007669"/>
    <property type="project" value="UniProtKB-UniRule"/>
</dbReference>
<dbReference type="GO" id="GO:0004828">
    <property type="term" value="F:serine-tRNA ligase activity"/>
    <property type="evidence" value="ECO:0007669"/>
    <property type="project" value="UniProtKB-UniRule"/>
</dbReference>
<dbReference type="GO" id="GO:0016260">
    <property type="term" value="P:selenocysteine biosynthetic process"/>
    <property type="evidence" value="ECO:0007669"/>
    <property type="project" value="UniProtKB-UniRule"/>
</dbReference>
<dbReference type="GO" id="GO:0006434">
    <property type="term" value="P:seryl-tRNA aminoacylation"/>
    <property type="evidence" value="ECO:0007669"/>
    <property type="project" value="UniProtKB-UniRule"/>
</dbReference>
<dbReference type="CDD" id="cd00770">
    <property type="entry name" value="SerRS_core"/>
    <property type="match status" value="1"/>
</dbReference>
<dbReference type="FunFam" id="3.30.930.10:FF:000055">
    <property type="entry name" value="Serine--tRNA ligase"/>
    <property type="match status" value="1"/>
</dbReference>
<dbReference type="Gene3D" id="3.30.930.10">
    <property type="entry name" value="Bira Bifunctional Protein, Domain 2"/>
    <property type="match status" value="1"/>
</dbReference>
<dbReference type="Gene3D" id="1.10.287.40">
    <property type="entry name" value="Serine-tRNA synthetase, tRNA binding domain"/>
    <property type="match status" value="1"/>
</dbReference>
<dbReference type="HAMAP" id="MF_00176">
    <property type="entry name" value="Ser_tRNA_synth_type1"/>
    <property type="match status" value="1"/>
</dbReference>
<dbReference type="InterPro" id="IPR002314">
    <property type="entry name" value="aa-tRNA-synt_IIb"/>
</dbReference>
<dbReference type="InterPro" id="IPR006195">
    <property type="entry name" value="aa-tRNA-synth_II"/>
</dbReference>
<dbReference type="InterPro" id="IPR045864">
    <property type="entry name" value="aa-tRNA-synth_II/BPL/LPL"/>
</dbReference>
<dbReference type="InterPro" id="IPR002317">
    <property type="entry name" value="Ser-tRNA-ligase_type_1"/>
</dbReference>
<dbReference type="InterPro" id="IPR015866">
    <property type="entry name" value="Ser-tRNA-synth_1_N"/>
</dbReference>
<dbReference type="InterPro" id="IPR042103">
    <property type="entry name" value="SerRS_1_N_sf"/>
</dbReference>
<dbReference type="InterPro" id="IPR033729">
    <property type="entry name" value="SerRS_core"/>
</dbReference>
<dbReference type="InterPro" id="IPR010978">
    <property type="entry name" value="tRNA-bd_arm"/>
</dbReference>
<dbReference type="NCBIfam" id="TIGR00414">
    <property type="entry name" value="serS"/>
    <property type="match status" value="1"/>
</dbReference>
<dbReference type="PANTHER" id="PTHR11778">
    <property type="entry name" value="SERYL-TRNA SYNTHETASE"/>
    <property type="match status" value="1"/>
</dbReference>
<dbReference type="Pfam" id="PF02403">
    <property type="entry name" value="Seryl_tRNA_N"/>
    <property type="match status" value="1"/>
</dbReference>
<dbReference type="Pfam" id="PF00587">
    <property type="entry name" value="tRNA-synt_2b"/>
    <property type="match status" value="1"/>
</dbReference>
<dbReference type="PIRSF" id="PIRSF001529">
    <property type="entry name" value="Ser-tRNA-synth_IIa"/>
    <property type="match status" value="1"/>
</dbReference>
<dbReference type="PRINTS" id="PR00981">
    <property type="entry name" value="TRNASYNTHSER"/>
</dbReference>
<dbReference type="SUPFAM" id="SSF55681">
    <property type="entry name" value="Class II aaRS and biotin synthetases"/>
    <property type="match status" value="1"/>
</dbReference>
<dbReference type="SUPFAM" id="SSF46589">
    <property type="entry name" value="tRNA-binding arm"/>
    <property type="match status" value="1"/>
</dbReference>
<dbReference type="PROSITE" id="PS50862">
    <property type="entry name" value="AA_TRNA_LIGASE_II"/>
    <property type="match status" value="1"/>
</dbReference>
<name>SYS_BORBZ</name>
<reference key="1">
    <citation type="journal article" date="2011" name="J. Bacteriol.">
        <title>Whole-genome sequences of thirteen isolates of Borrelia burgdorferi.</title>
        <authorList>
            <person name="Schutzer S.E."/>
            <person name="Fraser-Liggett C.M."/>
            <person name="Casjens S.R."/>
            <person name="Qiu W.G."/>
            <person name="Dunn J.J."/>
            <person name="Mongodin E.F."/>
            <person name="Luft B.J."/>
        </authorList>
    </citation>
    <scope>NUCLEOTIDE SEQUENCE [LARGE SCALE GENOMIC DNA]</scope>
    <source>
        <strain>ZS7</strain>
    </source>
</reference>
<gene>
    <name evidence="1" type="primary">serS</name>
    <name type="ordered locus">BbuZS7_0231</name>
</gene>
<sequence>MLDLKFIRDNLDLVKRSIKARGLVLDIDKLIYLDDKRKKLITKIGELNAKRNENSSKMQENLDKVLKISLIETGKILKKQLIDLEEELERVSVDFDLENKKVPNILSPDVPIGSSEEDNFEIKRVGVVPQFDFKPKDHLELGRDLDLLDFDRAREISGSKFYYLKNEAVFLEIALINFSLNKLRDKGFDVFITPDVAREFIVDGIGFNPRGNESNIYKIEDTDKYLVGTSEITLGGYYYNKIIDLTLPIRMAGFSHCFRKEAGAYGQLSKGLYRVHQFSKVEMFCFCKAEESGVIHDEFLSIQEQIFTELEIPYRVLNICSFDLGSPAYKKYDIEAWMPGRDGKGGYGEVTSTSNCTDYQSRRLKIRYKDQDGQNKFAHMVNGTAIATTRVIISILENFQDQKGGVRIPKSLVKYTGFDYIPFKN</sequence>
<protein>
    <recommendedName>
        <fullName evidence="1">Serine--tRNA ligase</fullName>
        <ecNumber evidence="1">6.1.1.11</ecNumber>
    </recommendedName>
    <alternativeName>
        <fullName evidence="1">Seryl-tRNA synthetase</fullName>
        <shortName evidence="1">SerRS</shortName>
    </alternativeName>
    <alternativeName>
        <fullName evidence="1">Seryl-tRNA(Ser/Sec) synthetase</fullName>
    </alternativeName>
</protein>
<evidence type="ECO:0000255" key="1">
    <source>
        <dbReference type="HAMAP-Rule" id="MF_00176"/>
    </source>
</evidence>
<accession>B7J1F4</accession>
<proteinExistence type="inferred from homology"/>